<name>DYHC_TRIGR</name>
<feature type="chain" id="PRO_0000114645" description="Dynein beta chain, ciliary">
    <location>
        <begin position="1"/>
        <end position="4466"/>
    </location>
</feature>
<feature type="region of interest" description="Stem" evidence="2">
    <location>
        <begin position="1"/>
        <end position="1813"/>
    </location>
</feature>
<feature type="region of interest" description="AAA 1" evidence="2">
    <location>
        <begin position="1814"/>
        <end position="2035"/>
    </location>
</feature>
<feature type="region of interest" description="AAA 2" evidence="2">
    <location>
        <begin position="2095"/>
        <end position="2316"/>
    </location>
</feature>
<feature type="region of interest" description="AAA 3" evidence="2">
    <location>
        <begin position="2422"/>
        <end position="2669"/>
    </location>
</feature>
<feature type="region of interest" description="AAA 4" evidence="2">
    <location>
        <begin position="2767"/>
        <end position="3016"/>
    </location>
</feature>
<feature type="region of interest" description="Stalk" evidence="2">
    <location>
        <begin position="3033"/>
        <end position="3325"/>
    </location>
</feature>
<feature type="region of interest" description="AAA 5" evidence="2">
    <location>
        <begin position="3409"/>
        <end position="3636"/>
    </location>
</feature>
<feature type="region of interest" description="AAA 6" evidence="2">
    <location>
        <begin position="3846"/>
        <end position="4072"/>
    </location>
</feature>
<feature type="coiled-coil region" evidence="1">
    <location>
        <begin position="733"/>
        <end position="805"/>
    </location>
</feature>
<feature type="coiled-coil region" evidence="1">
    <location>
        <begin position="1036"/>
        <end position="1056"/>
    </location>
</feature>
<feature type="coiled-coil region" evidence="1">
    <location>
        <begin position="1306"/>
        <end position="1337"/>
    </location>
</feature>
<feature type="coiled-coil region" evidence="1">
    <location>
        <begin position="1443"/>
        <end position="1468"/>
    </location>
</feature>
<feature type="coiled-coil region" evidence="1">
    <location>
        <begin position="3033"/>
        <end position="3092"/>
    </location>
</feature>
<feature type="coiled-coil region" evidence="1">
    <location>
        <begin position="3263"/>
        <end position="3325"/>
    </location>
</feature>
<feature type="coiled-coil region" evidence="1">
    <location>
        <begin position="3573"/>
        <end position="3642"/>
    </location>
</feature>
<feature type="binding site" evidence="1">
    <location>
        <begin position="154"/>
        <end position="161"/>
    </location>
    <ligand>
        <name>ATP</name>
        <dbReference type="ChEBI" id="CHEBI:30616"/>
    </ligand>
</feature>
<feature type="binding site" evidence="1">
    <location>
        <begin position="1852"/>
        <end position="1859"/>
    </location>
    <ligand>
        <name>ATP</name>
        <dbReference type="ChEBI" id="CHEBI:30616"/>
    </ligand>
</feature>
<feature type="binding site" evidence="1">
    <location>
        <begin position="2133"/>
        <end position="2140"/>
    </location>
    <ligand>
        <name>ATP</name>
        <dbReference type="ChEBI" id="CHEBI:30616"/>
    </ligand>
</feature>
<feature type="binding site" evidence="1">
    <location>
        <begin position="2460"/>
        <end position="2467"/>
    </location>
    <ligand>
        <name>ATP</name>
        <dbReference type="ChEBI" id="CHEBI:30616"/>
    </ligand>
</feature>
<feature type="binding site" evidence="1">
    <location>
        <begin position="2805"/>
        <end position="2812"/>
    </location>
    <ligand>
        <name>ATP</name>
        <dbReference type="ChEBI" id="CHEBI:30616"/>
    </ligand>
</feature>
<feature type="sequence variant">
    <location>
        <begin position="611"/>
        <end position="615"/>
    </location>
</feature>
<feature type="sequence variant">
    <original>P</original>
    <variation>LLTGNFFCCFMTA</variation>
    <location>
        <position position="3357"/>
    </location>
</feature>
<proteinExistence type="evidence at protein level"/>
<protein>
    <recommendedName>
        <fullName>Dynein beta chain, ciliary</fullName>
    </recommendedName>
</protein>
<evidence type="ECO:0000255" key="1"/>
<evidence type="ECO:0000305" key="2"/>
<sequence>MADVVDPRLEFISEYILKSYKLKPDKWAKCINVEENKILMLEFLEKADNPQLVFTVNAAGLITPSYEFPSALKNTKAIYFIKKGREPVGKDNIKTTLVYGDLSYTPLEQLSALVDEILVPLLANPRNHEQWPVVVSQDVLRHVHNLKSSVYVVAGQVKGKTLLPLPVGSEKVETAAESEEKDDSYDRSLVHAIESVIIDWTHQIRDVLKRDSAQPLLEGLNPGPMVEINFWKAKCENLDCIFQQLRDPKVRKMKELLERTQSSYLPSFNNIERDVEAALTEAQDINCYLKPLIYQVESLDELEFPDMTPRLAPILHTVCLIWSNSDYYNTAPRIIVLLQEICNLLIDLCRTFLDPSEIFKLEPEESLEKVRGALAVLKAWRDLYDEHRAKLKDYFKDGREVKGWEFASPLVFTRMDNFTSRIETIQSLFETNVEFSKLEKTEMGSMKGRMLSQQVEKIHEEFQECAKVFTERPYDGLDPQCQEFLDDYEEFEKKVFDLDRRLGSILCQGFDDCCGLEAVFKMLDCYGPLLDRPVIRNDFECKYPVVLMLYDLELDQAKEIYDEHMRVEENDGNAPLNKNMPDVAGQLKWSAQLRDRISKPMGSLKHMEHPTGVRRILESEDAKVVFQKYEEMINLLNKYEQKVFENWTKGVDEVCKTNLDQSLITRDESTKLIKINFDPKLVAVLREVKYLQIRGEESIPESAASIYEKHETLRKYVANLDLTQAWYNKVRNTVLEVEFPLIEGQLADLDTRLKQAESELNWTSDSVWEYIQETRDQVHDLEKRVQQTKDNVDRIKKIMAEWTKQPLFERKELKKESLLALDDRQDRLKKRYAEISTAGEKIHSLIKENLGLFKADASSDIWKAYVDYVDDMVIDGFFNCIHCTLSYLLENTDPRHCAAPLFEARLELQVPDMIFNPSLDYGVADGFYDLVEMLISDTYKMASLVSRLAEHNGQEHYQADLEGMDDLSDVRNDLMDRVQTIMTKAQEYRNSFDNYAYLYVDDRKEFMRQFLLYNHVLTTEEIEAHAEDGVPECPPTLDQFKEQVDTYEKIYSEADEIEPEQVFDAWFRVDSKPFKAALLNIIKKWSFMFKQHLIDHVTNSLSELQEFIKVGNSGLTKTVEEGDYNGLVECMGHLMAVKERQAATDEMFEPIKQTIELLKTYDQEMSEEVHTQLQELPEQWNNTKKIAITVKQQVAPLQANEVAIIRRKCTSFDVRQHEFRERFRKEAPFIFTFEGPYQCLDRCHSEIYEMEEHMANLQESAGLFEVNMPDYKQLKACRREVRLLKALWDLIMIVRTSIEDWKTTPWLEINVEQMEMDCKKFAKDIRSLDKEMRAWDAYNGLDATVKNMLTSLRAVSELQNPAIRERHWQQLMAATKVKFTMDKETTLSDLLALNLHNFEDEVRNIVDKAVKEMGMEKVLKELNTTWSSMDFEYEPHSRTGISLLKSNEELIETLEDNQVQLQNLMTSKHIAHFLEEVSGWQKKLSTTDSVITIWFEVQRTWSHLESIFIGSEDIRNQLPEDSKRFDGIDTDFKELASEMEKTPNVVEATNRARLYDRLEAIQGSLVVCEKALAEYLETKRLAFPRFYFVSSADLLDILSQGNNPSQVQRHLSKLFDNMAKLKFKQDDEGNDTKLALGMYSKEGEYVDFDKECECTGQVEVWLNRVMDAMRSTVRSQFADAVVSYEEKPREQWLYDYPAQVALATTQVWWTTEVNISFARLEEGHENSMKDYNKKQIQQLNTLIGLLIGKLTKGDRQKIMTICTIDVHARDVVAMMVLKKVDNAQAFQWLSQLRHRWADDDKHCYANICDAQFKYSYEYLGNTPRLVITPLTDRCYITLTQSLHLVMSGAPAGPAGTGKTETTKDLGRALGIMVYVFNCSEQMDYKSCGNIYKGLSQTGAWGCFDEFNRISVEVLSVVAVQVKCVQDAIRDKKERFNFMGEEISLIPSVGIFITMNPGYAGRTELPENLKALFRPCAMVVPDFELICEIMLVAEGFLDARLLARKFITLYTLCKELLSKQDHYDWGLRAIKSVLVVAGSLKRGDPQRPEDQVLMRALRDFNVPKIVSDDTPVFMGLIGDLFPALDVPRRRDMDFEKVVKQSTLDLKLQAEDSFVLKVVQLEELLAVRHSVFVIGNAGTGKSQVLKVLNKTYSNMKRKPVLVDLNPKAVTNDELFGIINPATREWKDGLFSVIMRDMSNITHDGPKWIVLDGDIDPMWIESLNTVMDDNKVLTLASNERIPLTPSMRLLFEISHLKTATPATVSRAGILYINPSDLGWNPIVTSWIDTREVQSERANLTILFDKYLPTLLDTLRVRFKKIIPIPEQSMVQMLCYLLECLLTPENTPADCPKELYELYFVFASIWAFGGSMFQDQLVDYRVEFSKWWITEFKTIKFPNQGTVFDYFIDQESKKFLPWSEKVPVFELDPEIPMQAVLVHTNETTRVRFFMDLLMERGRPVMLVGNAGLGKSVLVGDKLSNLGEDSMVANVPFNYYTTSEMLQRVLEKPLEKKAGRNYGPPGTKKLVYFIDDMNMPEVDTYGTVQPHTLIRQHMDYKHWYDRQKLTLKEIHKCQYVSCMNPTAGSFTINSRLQRHFCVFALSFPGQDALSTIYNSILSQHLANISVSNALQKLSPTVVSATLDLHKKVAQSFLPTAIKFHYVFNLRDLSNVFQGLLYSGPDLLKAPIDFARLWMHECQRVYGDKMINDQDIEAFEKLVLEYAKKFFEDVDEEALKAKPNIHCHFATGIGDPKYMQVPNWPELNKILVEALDTYNEINAVMNLVLFEDAMQHVCRINRILESPRGNALLVGVGGSGKQSLARLASYISSLEVFQITLRKGYGIPDLKLDLATVCMKAGLKNIGTVFLMTDAQVSDEKFLVLINDLLASGEIPDLFADDEVENIIGGVRNEVKGMGLQDTRENCWKFFIDRLRRQLKTVLCFSPVGTTLRVRSRKFPAVVNCTSIDWFHEWPQEALVSVSMRFLDEVELLKGDIKKSIAEFMAYVHVSVNESSKLYLTNERRYNYTTPKSFLEQIKLYESLLSMKSKELTAKMERLENGLTKLQSTAQQVDDLKAKLASQEVELAQKNEDADKLIQVVGVETEKVSKEKAIADDEEKKVAIINEEVSKKAKDCSEDLAKAEPALLAAQEALNTLNKNNLTELKSFGSPPSAVLKVAAAVMVLLAPNGKIPKDRSWKAAKVVMNKVDAFLDSLINYDKENIHENCLKSIKEYLNDPEFEPEYIKGKSLAAGGLCSWVVNIVKFYNVYCDVEPKRIALQKANDELKAAQDKLALIKAKIAELDANLAELTAQFEKATSDKLKCQQEAEATSRTITLANRLVGGLASENVRWGEAVANFKIQEKTLPGDVLLITAFVSYIGCFTKTYRVDLQERMWLPFLKSQKDPIPITEGLDVLSMLTDDADIAVWNNEGLPSDRMSTENATILSNCQRWPLMIDPQLQGIKWIKQKYGDDLRVIRIGQRGYLDTIENAISSGDTVLIENMEESIDPVLDPVLGRNTIKKGRYIKIGDKEVEYNPDFRLILQTKLANPHYKPEMQAQTTLINFTVTRDGLEDQLLANVVAQERPDLEKLKSDLTKQQNDFKIILKELEDNLLSRLSSAEGNFLGDTALVENLETTKRTAAEISVKVEEAKVTEVKINEARELYRPAAARASLLYFILNDLNKINPIYQFSLKAFNTVFSLPIARAEPCEDVKERVVNLIDCITYSVFIYTTRGLFEADKLIFTTQVAFQVLLMKKEIAQNELDFLLRFPIQVGLTSPVDFLTNSAWGAIKSLSAMEDFRNLDRDIEGSAKRWKKFVESECPEKEKFPQEWKNKSALQKLCMMRALRADRMSYAVRNFIEEKLGSKYVEGRQVEFAKSYEETDPATPVFFILSPGVDPLKDVEALGKKLGFTFDNNNFHNVSLGQGQEIVAEQCMDLAAKEGHWVILQNIHLVAKWLSTLEKKLEQYSVGSHDSYRVYMSAEPAGSPEAHIIPQGILESSIKITNEPPTGMFANLHKALYNFNQDTLEMCAREAEFKVILFALCYFHAVVCERQKFGPQGWNRSYPFNTGDLTISVNVLYNYLEANSKVPWQDLRYLFGEIMYGGHITDDWDRRLCRTYLEEYMAPEMLDGELYLAPGFPVPPNSDYKGYHQYIDEILPPESPYLYGLHPNAEIGFLTTESDNLFKIVLELQPRDAGGGGGGGSSREEKIKSLLDEIVEKLPEEFNMMEIMAKVEDRTPYVVVAFQECERMNMLTSEIRRSLKELDLGLKGELTITPDMEDLSNALFLDQIPATWVKRAYPSLFGLTSWYADLLQRIKELEQWTADFALPNVVWLGGFFNPQSFLTAIMQSMARKNEWPLDKMCLQCDVTKKNKEDFSSAPREGSYVHGLFMEGARWDTQTNMIADARLKELAPNMPVIFIKAIPVDKQDTRNIYECPVYKTKQRGPTFVWTFNLKSKEKAAKWTLAGVALLLQV</sequence>
<organism>
    <name type="scientific">Tripneustes gratilla</name>
    <name type="common">Hawaian sea urchin</name>
    <name type="synonym">Echinus gratilla</name>
    <dbReference type="NCBI Taxonomy" id="7673"/>
    <lineage>
        <taxon>Eukaryota</taxon>
        <taxon>Metazoa</taxon>
        <taxon>Echinodermata</taxon>
        <taxon>Eleutherozoa</taxon>
        <taxon>Echinozoa</taxon>
        <taxon>Echinoidea</taxon>
        <taxon>Euechinoidea</taxon>
        <taxon>Echinacea</taxon>
        <taxon>Temnopleuroida</taxon>
        <taxon>Toxopneustidae</taxon>
        <taxon>Tripneustes</taxon>
    </lineage>
</organism>
<accession>P23098</accession>
<reference key="1">
    <citation type="journal article" date="1991" name="Nature">
        <title>Multiple nucleotide-binding sites in the sequence of dynein beta heavy chain.</title>
        <authorList>
            <person name="Gibbons I.R."/>
            <person name="Gibbons B.H."/>
            <person name="Mocz G."/>
            <person name="Asai D.J."/>
        </authorList>
    </citation>
    <scope>NUCLEOTIDE SEQUENCE [MRNA]</scope>
    <scope>PROTEIN SEQUENCE OF 162-172; 1193-1204; 3240-3259 AND 3325-3339</scope>
    <source>
        <tissue>Blastula</tissue>
        <tissue>Sperm</tissue>
    </source>
</reference>
<reference key="2">
    <citation type="journal article" date="1991" name="Proc. Natl. Acad. Sci. U.S.A.">
        <title>A PCR procedure to determine the sequence of large polypeptides by rapid walking through a cDNA library.</title>
        <authorList>
            <person name="Gibbons I.R."/>
            <person name="Asai D.J."/>
            <person name="Ching N.S."/>
            <person name="Dolecki G.J."/>
            <person name="Mocz G."/>
            <person name="Phillipson C.A."/>
            <person name="Ren H."/>
            <person name="Tang W.Y."/>
            <person name="Gibbons B.H."/>
        </authorList>
    </citation>
    <scope>NUCLEOTIDE SEQUENCE [MRNA]</scope>
</reference>
<reference key="3">
    <citation type="journal article" date="2001" name="Structure">
        <title>Model for the motor component of dynein heavy chain based on homology to the AAA family of oligomeric ATPases.</title>
        <authorList>
            <person name="Mocz G."/>
            <person name="Gibbons I.R."/>
        </authorList>
    </citation>
    <scope>3D-STRUCTURE MODELING</scope>
</reference>
<comment type="function">
    <text>Force generating protein of eukaryotic cilia and flagella. Produces force towards the minus ends of microtubules. Dynein has ATPase activity; the force-producing power stroke is thought to occur on release of ADP.</text>
</comment>
<comment type="subunit">
    <text>Consists of at least two heavy chains (alpha and beta), three intermediate chains and several light chains.</text>
</comment>
<comment type="subcellular location">
    <subcellularLocation>
        <location>Cell projection</location>
        <location>Cilium</location>
        <location>Flagellum</location>
    </subcellularLocation>
    <subcellularLocation>
        <location>Cytoplasm</location>
        <location>Cytoskeleton</location>
        <location>Flagellum axoneme</location>
    </subcellularLocation>
</comment>
<comment type="domain">
    <text>Dynein heavy chains probably consist of an N-terminal stem (which binds cargo and interacts with other dynein components), and the head or motor domain. The motor contains six tandemly-linked AAA domains in the head, which form a ring. A stalk-like structure (formed by two of the coiled coil domains) protrudes between AAA 4 and AAA 5 and terminates in a microtubule-binding site. A seventh domain may also contribute to this ring; it is not clear whether the N-terminus or the C-terminus forms this extra domain. There are four well-conserved and two non-conserved ATPase sites, one per AAA domain. Probably only one of these (within AAA 1) actually hydrolyzes ATP, the others may serve a regulatory function.</text>
</comment>
<comment type="similarity">
    <text evidence="2">Belongs to the dynein heavy chain family.</text>
</comment>
<dbReference type="EMBL" id="X59603">
    <property type="protein sequence ID" value="CAA42170.1"/>
    <property type="molecule type" value="mRNA"/>
</dbReference>
<dbReference type="PIR" id="S17653">
    <property type="entry name" value="S17653"/>
</dbReference>
<dbReference type="SMR" id="P23098"/>
<dbReference type="GO" id="GO:0005737">
    <property type="term" value="C:cytoplasm"/>
    <property type="evidence" value="ECO:0007669"/>
    <property type="project" value="UniProtKB-KW"/>
</dbReference>
<dbReference type="GO" id="GO:0030286">
    <property type="term" value="C:dynein complex"/>
    <property type="evidence" value="ECO:0007669"/>
    <property type="project" value="UniProtKB-KW"/>
</dbReference>
<dbReference type="GO" id="GO:0005874">
    <property type="term" value="C:microtubule"/>
    <property type="evidence" value="ECO:0007669"/>
    <property type="project" value="UniProtKB-KW"/>
</dbReference>
<dbReference type="GO" id="GO:0031514">
    <property type="term" value="C:motile cilium"/>
    <property type="evidence" value="ECO:0007669"/>
    <property type="project" value="UniProtKB-SubCell"/>
</dbReference>
<dbReference type="GO" id="GO:0005524">
    <property type="term" value="F:ATP binding"/>
    <property type="evidence" value="ECO:0007669"/>
    <property type="project" value="UniProtKB-KW"/>
</dbReference>
<dbReference type="GO" id="GO:0045505">
    <property type="term" value="F:dynein intermediate chain binding"/>
    <property type="evidence" value="ECO:0007669"/>
    <property type="project" value="InterPro"/>
</dbReference>
<dbReference type="GO" id="GO:0051959">
    <property type="term" value="F:dynein light intermediate chain binding"/>
    <property type="evidence" value="ECO:0007669"/>
    <property type="project" value="InterPro"/>
</dbReference>
<dbReference type="GO" id="GO:0008569">
    <property type="term" value="F:minus-end-directed microtubule motor activity"/>
    <property type="evidence" value="ECO:0007669"/>
    <property type="project" value="InterPro"/>
</dbReference>
<dbReference type="GO" id="GO:0030030">
    <property type="term" value="P:cell projection organization"/>
    <property type="evidence" value="ECO:0007669"/>
    <property type="project" value="UniProtKB-KW"/>
</dbReference>
<dbReference type="GO" id="GO:0007018">
    <property type="term" value="P:microtubule-based movement"/>
    <property type="evidence" value="ECO:0007669"/>
    <property type="project" value="InterPro"/>
</dbReference>
<dbReference type="FunFam" id="3.40.50.300:FF:001810">
    <property type="entry name" value="Cytoplasmic dynein 2 heavy chain 1"/>
    <property type="match status" value="1"/>
</dbReference>
<dbReference type="FunFam" id="1.10.287.2620:FF:000004">
    <property type="entry name" value="Dynein axonemal heavy chain 17"/>
    <property type="match status" value="1"/>
</dbReference>
<dbReference type="FunFam" id="1.20.1270.280:FF:000003">
    <property type="entry name" value="Dynein axonemal heavy chain 17"/>
    <property type="match status" value="1"/>
</dbReference>
<dbReference type="FunFam" id="1.20.920.20:FF:000003">
    <property type="entry name" value="Dynein axonemal heavy chain 17"/>
    <property type="match status" value="1"/>
</dbReference>
<dbReference type="FunFam" id="1.20.920.30:FF:000003">
    <property type="entry name" value="Dynein axonemal heavy chain 17"/>
    <property type="match status" value="1"/>
</dbReference>
<dbReference type="FunFam" id="3.10.490.20:FF:000002">
    <property type="entry name" value="Dynein axonemal heavy chain 17"/>
    <property type="match status" value="1"/>
</dbReference>
<dbReference type="FunFam" id="3.40.50.300:FF:000219">
    <property type="entry name" value="Dynein axonemal heavy chain 17"/>
    <property type="match status" value="1"/>
</dbReference>
<dbReference type="FunFam" id="3.40.50.300:FF:000682">
    <property type="entry name" value="Dynein axonemal heavy chain 17"/>
    <property type="match status" value="1"/>
</dbReference>
<dbReference type="FunFam" id="1.10.8.1220:FF:000001">
    <property type="entry name" value="Dynein axonemal heavy chain 5"/>
    <property type="match status" value="1"/>
</dbReference>
<dbReference type="FunFam" id="3.20.180.20:FF:000001">
    <property type="entry name" value="Dynein axonemal heavy chain 5"/>
    <property type="match status" value="1"/>
</dbReference>
<dbReference type="FunFam" id="1.20.140.100:FF:000007">
    <property type="entry name" value="Dynein axonemal heavy chain 9"/>
    <property type="match status" value="1"/>
</dbReference>
<dbReference type="FunFam" id="1.10.8.710:FF:000002">
    <property type="entry name" value="dynein heavy chain 17, axonemal"/>
    <property type="match status" value="1"/>
</dbReference>
<dbReference type="FunFam" id="3.40.50.300:FF:000411">
    <property type="entry name" value="dynein heavy chain 17, axonemal"/>
    <property type="match status" value="1"/>
</dbReference>
<dbReference type="FunFam" id="1.10.8.720:FF:000002">
    <property type="entry name" value="Dynein heavy chain 9, axonemal"/>
    <property type="match status" value="1"/>
</dbReference>
<dbReference type="FunFam" id="1.20.58.1120:FF:000002">
    <property type="entry name" value="Dynein heavy chain 9, axonemal"/>
    <property type="match status" value="1"/>
</dbReference>
<dbReference type="FunFam" id="3.40.50.300:FF:000049">
    <property type="entry name" value="Dynein, axonemal, heavy chain 5"/>
    <property type="match status" value="1"/>
</dbReference>
<dbReference type="FunFam" id="1.10.472.130:FF:000001">
    <property type="entry name" value="Dynein, axonemal, heavy chain 9"/>
    <property type="match status" value="1"/>
</dbReference>
<dbReference type="Gene3D" id="1.10.287.2620">
    <property type="match status" value="1"/>
</dbReference>
<dbReference type="Gene3D" id="1.10.472.130">
    <property type="match status" value="1"/>
</dbReference>
<dbReference type="Gene3D" id="1.10.8.1220">
    <property type="match status" value="1"/>
</dbReference>
<dbReference type="Gene3D" id="1.10.8.710">
    <property type="match status" value="1"/>
</dbReference>
<dbReference type="Gene3D" id="1.20.1270.280">
    <property type="match status" value="1"/>
</dbReference>
<dbReference type="Gene3D" id="1.20.58.1120">
    <property type="match status" value="1"/>
</dbReference>
<dbReference type="Gene3D" id="1.20.920.20">
    <property type="match status" value="1"/>
</dbReference>
<dbReference type="Gene3D" id="1.20.920.30">
    <property type="match status" value="1"/>
</dbReference>
<dbReference type="Gene3D" id="3.10.490.20">
    <property type="match status" value="1"/>
</dbReference>
<dbReference type="Gene3D" id="6.10.140.1060">
    <property type="match status" value="1"/>
</dbReference>
<dbReference type="Gene3D" id="1.20.140.100">
    <property type="entry name" value="Dynein heavy chain, N-terminal domain 2"/>
    <property type="match status" value="1"/>
</dbReference>
<dbReference type="Gene3D" id="3.20.180.20">
    <property type="entry name" value="Dynein heavy chain, N-terminal domain 2"/>
    <property type="match status" value="1"/>
</dbReference>
<dbReference type="Gene3D" id="3.40.50.300">
    <property type="entry name" value="P-loop containing nucleotide triphosphate hydrolases"/>
    <property type="match status" value="5"/>
</dbReference>
<dbReference type="Gene3D" id="1.10.8.720">
    <property type="entry name" value="Region D6 of dynein motor"/>
    <property type="match status" value="1"/>
</dbReference>
<dbReference type="InterPro" id="IPR035699">
    <property type="entry name" value="AAA_6"/>
</dbReference>
<dbReference type="InterPro" id="IPR035706">
    <property type="entry name" value="AAA_9"/>
</dbReference>
<dbReference type="InterPro" id="IPR041658">
    <property type="entry name" value="AAA_lid_11"/>
</dbReference>
<dbReference type="InterPro" id="IPR042219">
    <property type="entry name" value="AAA_lid_11_sf"/>
</dbReference>
<dbReference type="InterPro" id="IPR026983">
    <property type="entry name" value="DHC"/>
</dbReference>
<dbReference type="InterPro" id="IPR041589">
    <property type="entry name" value="DNAH3_AAA_lid_1"/>
</dbReference>
<dbReference type="InterPro" id="IPR042222">
    <property type="entry name" value="Dynein_2_N"/>
</dbReference>
<dbReference type="InterPro" id="IPR043157">
    <property type="entry name" value="Dynein_AAA1S"/>
</dbReference>
<dbReference type="InterPro" id="IPR041466">
    <property type="entry name" value="Dynein_AAA5_ext"/>
</dbReference>
<dbReference type="InterPro" id="IPR041228">
    <property type="entry name" value="Dynein_C"/>
</dbReference>
<dbReference type="InterPro" id="IPR043160">
    <property type="entry name" value="Dynein_C_barrel"/>
</dbReference>
<dbReference type="InterPro" id="IPR024743">
    <property type="entry name" value="Dynein_HC_stalk"/>
</dbReference>
<dbReference type="InterPro" id="IPR024317">
    <property type="entry name" value="Dynein_heavy_chain_D4_dom"/>
</dbReference>
<dbReference type="InterPro" id="IPR004273">
    <property type="entry name" value="Dynein_heavy_D6_P-loop"/>
</dbReference>
<dbReference type="InterPro" id="IPR013602">
    <property type="entry name" value="Dynein_heavy_linker"/>
</dbReference>
<dbReference type="InterPro" id="IPR013594">
    <property type="entry name" value="Dynein_heavy_tail"/>
</dbReference>
<dbReference type="InterPro" id="IPR042228">
    <property type="entry name" value="Dynein_linker_3"/>
</dbReference>
<dbReference type="InterPro" id="IPR027417">
    <property type="entry name" value="P-loop_NTPase"/>
</dbReference>
<dbReference type="PANTHER" id="PTHR45703:SF4">
    <property type="entry name" value="DYNEIN AXONEMAL HEAVY CHAIN 17"/>
    <property type="match status" value="1"/>
</dbReference>
<dbReference type="PANTHER" id="PTHR45703">
    <property type="entry name" value="DYNEIN HEAVY CHAIN"/>
    <property type="match status" value="1"/>
</dbReference>
<dbReference type="Pfam" id="PF12774">
    <property type="entry name" value="AAA_6"/>
    <property type="match status" value="1"/>
</dbReference>
<dbReference type="Pfam" id="PF12775">
    <property type="entry name" value="AAA_7"/>
    <property type="match status" value="1"/>
</dbReference>
<dbReference type="Pfam" id="PF12780">
    <property type="entry name" value="AAA_8"/>
    <property type="match status" value="1"/>
</dbReference>
<dbReference type="Pfam" id="PF12781">
    <property type="entry name" value="AAA_9"/>
    <property type="match status" value="1"/>
</dbReference>
<dbReference type="Pfam" id="PF17857">
    <property type="entry name" value="AAA_lid_1"/>
    <property type="match status" value="1"/>
</dbReference>
<dbReference type="Pfam" id="PF18198">
    <property type="entry name" value="AAA_lid_11"/>
    <property type="match status" value="1"/>
</dbReference>
<dbReference type="Pfam" id="PF08385">
    <property type="entry name" value="DHC_N1"/>
    <property type="match status" value="1"/>
</dbReference>
<dbReference type="Pfam" id="PF08393">
    <property type="entry name" value="DHC_N2"/>
    <property type="match status" value="1"/>
</dbReference>
<dbReference type="Pfam" id="PF17852">
    <property type="entry name" value="Dynein_AAA_lid"/>
    <property type="match status" value="1"/>
</dbReference>
<dbReference type="Pfam" id="PF18199">
    <property type="entry name" value="Dynein_C"/>
    <property type="match status" value="1"/>
</dbReference>
<dbReference type="Pfam" id="PF03028">
    <property type="entry name" value="Dynein_heavy"/>
    <property type="match status" value="1"/>
</dbReference>
<dbReference type="Pfam" id="PF12777">
    <property type="entry name" value="MT"/>
    <property type="match status" value="1"/>
</dbReference>
<dbReference type="SUPFAM" id="SSF52540">
    <property type="entry name" value="P-loop containing nucleoside triphosphate hydrolases"/>
    <property type="match status" value="4"/>
</dbReference>
<keyword id="KW-0067">ATP-binding</keyword>
<keyword id="KW-0966">Cell projection</keyword>
<keyword id="KW-0969">Cilium</keyword>
<keyword id="KW-0970">Cilium biogenesis/degradation</keyword>
<keyword id="KW-0175">Coiled coil</keyword>
<keyword id="KW-0963">Cytoplasm</keyword>
<keyword id="KW-0206">Cytoskeleton</keyword>
<keyword id="KW-0903">Direct protein sequencing</keyword>
<keyword id="KW-0243">Dynein</keyword>
<keyword id="KW-0282">Flagellum</keyword>
<keyword id="KW-0493">Microtubule</keyword>
<keyword id="KW-0505">Motor protein</keyword>
<keyword id="KW-0547">Nucleotide-binding</keyword>
<keyword id="KW-0677">Repeat</keyword>